<accession>Q80Y24</accession>
<accession>A6H652</accession>
<keyword id="KW-0440">LIM domain</keyword>
<keyword id="KW-0449">Lipoprotein</keyword>
<keyword id="KW-0472">Membrane</keyword>
<keyword id="KW-0479">Metal-binding</keyword>
<keyword id="KW-0488">Methylation</keyword>
<keyword id="KW-0539">Nucleus</keyword>
<keyword id="KW-0597">Phosphoprotein</keyword>
<keyword id="KW-0636">Prenylation</keyword>
<keyword id="KW-1185">Reference proteome</keyword>
<keyword id="KW-0677">Repeat</keyword>
<keyword id="KW-0862">Zinc</keyword>
<organism>
    <name type="scientific">Mus musculus</name>
    <name type="common">Mouse</name>
    <dbReference type="NCBI Taxonomy" id="10090"/>
    <lineage>
        <taxon>Eukaryota</taxon>
        <taxon>Metazoa</taxon>
        <taxon>Chordata</taxon>
        <taxon>Craniata</taxon>
        <taxon>Vertebrata</taxon>
        <taxon>Euteleostomi</taxon>
        <taxon>Mammalia</taxon>
        <taxon>Eutheria</taxon>
        <taxon>Euarchontoglires</taxon>
        <taxon>Glires</taxon>
        <taxon>Rodentia</taxon>
        <taxon>Myomorpha</taxon>
        <taxon>Muroidea</taxon>
        <taxon>Muridae</taxon>
        <taxon>Murinae</taxon>
        <taxon>Mus</taxon>
        <taxon>Mus</taxon>
    </lineage>
</organism>
<gene>
    <name type="primary">Prickle2</name>
</gene>
<reference key="1">
    <citation type="submission" date="2005-07" db="EMBL/GenBank/DDBJ databases">
        <authorList>
            <person name="Mural R.J."/>
            <person name="Adams M.D."/>
            <person name="Myers E.W."/>
            <person name="Smith H.O."/>
            <person name="Venter J.C."/>
        </authorList>
    </citation>
    <scope>NUCLEOTIDE SEQUENCE [LARGE SCALE GENOMIC DNA]</scope>
</reference>
<reference key="2">
    <citation type="journal article" date="2004" name="Genome Res.">
        <title>The status, quality, and expansion of the NIH full-length cDNA project: the Mammalian Gene Collection (MGC).</title>
        <authorList>
            <consortium name="The MGC Project Team"/>
        </authorList>
    </citation>
    <scope>NUCLEOTIDE SEQUENCE [LARGE SCALE MRNA]</scope>
    <source>
        <tissue>Testis</tissue>
    </source>
</reference>
<reference key="3">
    <citation type="journal article" date="2003" name="Int. J. Mol. Med.">
        <title>Identification and characterization of human PRICKLE1 and PRICKLE2 genes as well as mouse Prickle1 and Prickle2 genes homologous to Drosophila tissue polarity gene prickle.</title>
        <authorList>
            <person name="Katoh M."/>
            <person name="Katoh M."/>
        </authorList>
    </citation>
    <scope>IDENTIFICATION</scope>
    <scope>CHARACTERIZATION</scope>
</reference>
<reference key="4">
    <citation type="journal article" date="2006" name="Mol. Cell. Proteomics">
        <title>Comprehensive identification of phosphorylation sites in postsynaptic density preparations.</title>
        <authorList>
            <person name="Trinidad J.C."/>
            <person name="Specht C.G."/>
            <person name="Thalhammer A."/>
            <person name="Schoepfer R."/>
            <person name="Burlingame A.L."/>
        </authorList>
    </citation>
    <scope>PHOSPHORYLATION [LARGE SCALE ANALYSIS] AT SER-92</scope>
    <scope>IDENTIFICATION BY MASS SPECTROMETRY [LARGE SCALE ANALYSIS]</scope>
    <source>
        <tissue>Brain</tissue>
    </source>
</reference>
<reference key="5">
    <citation type="journal article" date="2010" name="Cell">
        <title>A tissue-specific atlas of mouse protein phosphorylation and expression.</title>
        <authorList>
            <person name="Huttlin E.L."/>
            <person name="Jedrychowski M.P."/>
            <person name="Elias J.E."/>
            <person name="Goswami T."/>
            <person name="Rad R."/>
            <person name="Beausoleil S.A."/>
            <person name="Villen J."/>
            <person name="Haas W."/>
            <person name="Sowa M.E."/>
            <person name="Gygi S.P."/>
        </authorList>
    </citation>
    <scope>PHOSPHORYLATION [LARGE SCALE ANALYSIS] AT SER-319; SER-321; SER-322; THR-535; THR-537; THR-540; SER-544; SER-547; SER-608; SER-643 AND SER-732</scope>
    <scope>IDENTIFICATION BY MASS SPECTROMETRY [LARGE SCALE ANALYSIS]</scope>
    <source>
        <tissue>Brain</tissue>
        <tissue>Kidney</tissue>
        <tissue>Lung</tissue>
    </source>
</reference>
<reference key="6">
    <citation type="journal article" date="2011" name="Am. J. Hum. Genet.">
        <title>Mutations in prickle orthologs cause seizures in flies, mice, and humans.</title>
        <authorList>
            <person name="Tao H."/>
            <person name="Manak J.R."/>
            <person name="Sowers L."/>
            <person name="Mei X."/>
            <person name="Kiyonari H."/>
            <person name="Abe T."/>
            <person name="Dahdaleh N.S."/>
            <person name="Yang T."/>
            <person name="Wu S."/>
            <person name="Chen S."/>
            <person name="Fox M.H."/>
            <person name="Gurnett C."/>
            <person name="Montine T."/>
            <person name="Bird T."/>
            <person name="Shaffer L.G."/>
            <person name="Rosenfeld J.A."/>
            <person name="McConnell J."/>
            <person name="Madan-Khetarpal S."/>
            <person name="Berry-Kravis E."/>
            <person name="Griesbach H."/>
            <person name="Saneto R.P."/>
            <person name="Scott M.P."/>
            <person name="Antic D."/>
            <person name="Reed J."/>
            <person name="Boland R."/>
            <person name="Ehaideb S.N."/>
            <person name="El-Shanti H."/>
            <person name="Mahajan V.B."/>
            <person name="Ferguson P.J."/>
            <person name="Axelrod J.D."/>
            <person name="Lehesjoki A.E."/>
            <person name="Fritzsch B."/>
            <person name="Slusarski D.C."/>
            <person name="Wemmie J."/>
            <person name="Ueno N."/>
            <person name="Bassuk A.G."/>
        </authorList>
    </citation>
    <scope>TISSUE SPECIFICITY</scope>
    <scope>DISRUPTION PHENOTYPE</scope>
</reference>
<sequence length="845" mass="95781">MVTVMPLEMEKTISKLMFDFQRSSTSDDDSGCALEEYAWVPPGLKPEQVHQYYSCLPEEKVPYVNSAGEKLRIKQLLHQLPPHDNEVRYCNSLDEEEKRELKLFSNQRKRENLGRGNVRPFPVTMTGAICEQCGGQIKGGDIAVFASRAGHGICWHPPCFVCTVCNELLVDLIYFYQDGKIYCGRHHAECLKPRCAACDEIIFADECTEAEGRHWHMRHFCCFECETVLGGQRYIMKEGRPYCCHCFESLYAEYCDTCAQHIGIDQGQMTYDGQHWHATETCFCCAHCKKSLLGRPFLPKQGQIFCSRACSAGEDPNGSDSSDSAFQNARAKESRRSAKIGKNKGKTEEAMLNQHSQLQVSSNRLSADVDPLSVQMDLLSLSSQTPSLNRDPIWRSREEPFHYGNKMEQNQSQSPLQLLSQCNIRTSYSPGGQGAGAQPDMWAKHFSNPKRSSSMALKGHGGSFIQECREDYYPGRLMSQESYSDMSSQSFNETRGSIPVPKYEEEEEEEEGGISTQQCRPRRPLSSLKYTEDMTPTEQTPRGSMESLALSNATGLSAEGGAKRQEHLSRFSMPDLSKDSGMNVSEKLSNMGTLNSSMQFRSAESVRSLLSAQQYQEMEGNLHQLSNPLGYRDLQSHGRMHQSFDFDGGIASSKLPGQEGVHIQPMSERTRRRTTSRDDNRRFRPHRSRRSRRSRSDNALHLASEREVIARLKERPPLRAREDYDQFMRQRSFQESLGQGSRRDLYSQCPRTVSDLALQNAFGERWGPYFTEYDWCSTCSSSSESDNEGYFLGEPIPQPARLRYVTSDELLHKYSSYGVPKSSTLGGRGQLHSRKRQKSKNCIIS</sequence>
<proteinExistence type="evidence at protein level"/>
<feature type="chain" id="PRO_0000075892" description="Prickle-like protein 2">
    <location>
        <begin position="1"/>
        <end position="842"/>
    </location>
</feature>
<feature type="propeptide" id="PRO_0000396719" description="Removed in mature form" evidence="1">
    <location>
        <begin position="843"/>
        <end position="845"/>
    </location>
</feature>
<feature type="domain" description="PET" evidence="3">
    <location>
        <begin position="18"/>
        <end position="126"/>
    </location>
</feature>
<feature type="domain" description="LIM zinc-binding 1" evidence="2">
    <location>
        <begin position="128"/>
        <end position="193"/>
    </location>
</feature>
<feature type="domain" description="LIM zinc-binding 2" evidence="2">
    <location>
        <begin position="193"/>
        <end position="253"/>
    </location>
</feature>
<feature type="domain" description="LIM zinc-binding 3" evidence="2">
    <location>
        <begin position="253"/>
        <end position="317"/>
    </location>
</feature>
<feature type="region of interest" description="Disordered" evidence="4">
    <location>
        <begin position="314"/>
        <end position="346"/>
    </location>
</feature>
<feature type="region of interest" description="Disordered" evidence="4">
    <location>
        <begin position="483"/>
        <end position="546"/>
    </location>
</feature>
<feature type="region of interest" description="Disordered" evidence="4">
    <location>
        <begin position="558"/>
        <end position="581"/>
    </location>
</feature>
<feature type="region of interest" description="Disordered" evidence="4">
    <location>
        <begin position="642"/>
        <end position="700"/>
    </location>
</feature>
<feature type="region of interest" description="Disordered" evidence="4">
    <location>
        <begin position="823"/>
        <end position="845"/>
    </location>
</feature>
<feature type="compositionally biased region" description="Polar residues" evidence="4">
    <location>
        <begin position="318"/>
        <end position="327"/>
    </location>
</feature>
<feature type="compositionally biased region" description="Basic residues" evidence="4">
    <location>
        <begin position="683"/>
        <end position="693"/>
    </location>
</feature>
<feature type="modified residue" description="Phosphoserine" evidence="7">
    <location>
        <position position="92"/>
    </location>
</feature>
<feature type="modified residue" description="Phosphoserine" evidence="8">
    <location>
        <position position="319"/>
    </location>
</feature>
<feature type="modified residue" description="Phosphoserine" evidence="8">
    <location>
        <position position="321"/>
    </location>
</feature>
<feature type="modified residue" description="Phosphoserine" evidence="8">
    <location>
        <position position="322"/>
    </location>
</feature>
<feature type="modified residue" description="Phosphothreonine" evidence="8">
    <location>
        <position position="535"/>
    </location>
</feature>
<feature type="modified residue" description="Phosphothreonine" evidence="8">
    <location>
        <position position="537"/>
    </location>
</feature>
<feature type="modified residue" description="Phosphothreonine" evidence="8">
    <location>
        <position position="540"/>
    </location>
</feature>
<feature type="modified residue" description="Phosphoserine" evidence="8">
    <location>
        <position position="544"/>
    </location>
</feature>
<feature type="modified residue" description="Phosphoserine" evidence="8">
    <location>
        <position position="547"/>
    </location>
</feature>
<feature type="modified residue" description="Phosphoserine" evidence="8">
    <location>
        <position position="608"/>
    </location>
</feature>
<feature type="modified residue" description="Phosphoserine" evidence="8">
    <location>
        <position position="643"/>
    </location>
</feature>
<feature type="modified residue" description="Phosphoserine" evidence="8">
    <location>
        <position position="732"/>
    </location>
</feature>
<feature type="modified residue" description="Cysteine methyl ester" evidence="1">
    <location>
        <position position="842"/>
    </location>
</feature>
<feature type="lipid moiety-binding region" description="S-farnesyl cysteine" evidence="1">
    <location>
        <position position="842"/>
    </location>
</feature>
<feature type="sequence conflict" description="In Ref. 2; AAH50793." evidence="6" ref="2">
    <original>G</original>
    <variation>D</variation>
    <location>
        <position position="273"/>
    </location>
</feature>
<dbReference type="EMBL" id="CH466523">
    <property type="protein sequence ID" value="EDK99322.1"/>
    <property type="molecule type" value="Genomic_DNA"/>
</dbReference>
<dbReference type="EMBL" id="BC145754">
    <property type="protein sequence ID" value="AAI45755.1"/>
    <property type="molecule type" value="mRNA"/>
</dbReference>
<dbReference type="EMBL" id="BC050793">
    <property type="protein sequence ID" value="AAH50793.1"/>
    <property type="status" value="ALT_INIT"/>
    <property type="molecule type" value="mRNA"/>
</dbReference>
<dbReference type="CCDS" id="CCDS51854.1"/>
<dbReference type="RefSeq" id="NP_001127931.1">
    <property type="nucleotide sequence ID" value="NM_001134459.2"/>
</dbReference>
<dbReference type="RefSeq" id="NP_001127932.1">
    <property type="nucleotide sequence ID" value="NM_001134460.3"/>
</dbReference>
<dbReference type="RefSeq" id="NP_001127933.1">
    <property type="nucleotide sequence ID" value="NM_001134461.2"/>
</dbReference>
<dbReference type="RefSeq" id="XP_036022012.1">
    <property type="nucleotide sequence ID" value="XM_036166119.1"/>
</dbReference>
<dbReference type="SMR" id="Q80Y24"/>
<dbReference type="BioGRID" id="232537">
    <property type="interactions" value="56"/>
</dbReference>
<dbReference type="FunCoup" id="Q80Y24">
    <property type="interactions" value="679"/>
</dbReference>
<dbReference type="IntAct" id="Q80Y24">
    <property type="interactions" value="2"/>
</dbReference>
<dbReference type="MINT" id="Q80Y24"/>
<dbReference type="STRING" id="10090.ENSMUSP00000032093"/>
<dbReference type="GlyGen" id="Q80Y24">
    <property type="glycosylation" value="6 sites, 3 N-linked glycans (3 sites), 1 O-linked glycan (3 sites)"/>
</dbReference>
<dbReference type="iPTMnet" id="Q80Y24"/>
<dbReference type="SwissPalm" id="Q80Y24"/>
<dbReference type="PaxDb" id="10090-ENSMUSP00000109073"/>
<dbReference type="ProteomicsDB" id="291560"/>
<dbReference type="Antibodypedia" id="50866">
    <property type="antibodies" value="71 antibodies from 21 providers"/>
</dbReference>
<dbReference type="DNASU" id="243548"/>
<dbReference type="Ensembl" id="ENSMUST00000113445.2">
    <property type="protein sequence ID" value="ENSMUSP00000109072.2"/>
    <property type="gene ID" value="ENSMUSG00000030020.14"/>
</dbReference>
<dbReference type="Ensembl" id="ENSMUST00000113446.8">
    <property type="protein sequence ID" value="ENSMUSP00000109073.2"/>
    <property type="gene ID" value="ENSMUSG00000030020.14"/>
</dbReference>
<dbReference type="Ensembl" id="ENSMUST00000113447.8">
    <property type="protein sequence ID" value="ENSMUSP00000109074.2"/>
    <property type="gene ID" value="ENSMUSG00000030020.14"/>
</dbReference>
<dbReference type="GeneID" id="243548"/>
<dbReference type="KEGG" id="mmu:243548"/>
<dbReference type="UCSC" id="uc009cyx.2">
    <property type="organism name" value="mouse"/>
</dbReference>
<dbReference type="AGR" id="MGI:1925144"/>
<dbReference type="CTD" id="166336"/>
<dbReference type="MGI" id="MGI:1925144">
    <property type="gene designation" value="Prickle2"/>
</dbReference>
<dbReference type="VEuPathDB" id="HostDB:ENSMUSG00000030020"/>
<dbReference type="eggNOG" id="KOG1704">
    <property type="taxonomic scope" value="Eukaryota"/>
</dbReference>
<dbReference type="GeneTree" id="ENSGT00940000153629"/>
<dbReference type="HOGENOM" id="CLU_008937_5_0_1"/>
<dbReference type="InParanoid" id="Q80Y24"/>
<dbReference type="OMA" id="GMSAQQC"/>
<dbReference type="OrthoDB" id="10069167at2759"/>
<dbReference type="TreeFam" id="TF313265"/>
<dbReference type="BioGRID-ORCS" id="243548">
    <property type="hits" value="2 hits in 75 CRISPR screens"/>
</dbReference>
<dbReference type="CD-CODE" id="CE726F99">
    <property type="entry name" value="Postsynaptic density"/>
</dbReference>
<dbReference type="ChiTaRS" id="Prickle2">
    <property type="organism name" value="mouse"/>
</dbReference>
<dbReference type="PRO" id="PR:Q80Y24"/>
<dbReference type="Proteomes" id="UP000000589">
    <property type="component" value="Chromosome 6"/>
</dbReference>
<dbReference type="RNAct" id="Q80Y24">
    <property type="molecule type" value="protein"/>
</dbReference>
<dbReference type="Bgee" id="ENSMUSG00000030020">
    <property type="expression patterns" value="Expressed in piriform cortex and 236 other cell types or tissues"/>
</dbReference>
<dbReference type="ExpressionAtlas" id="Q80Y24">
    <property type="expression patterns" value="baseline and differential"/>
</dbReference>
<dbReference type="GO" id="GO:0016327">
    <property type="term" value="C:apicolateral plasma membrane"/>
    <property type="evidence" value="ECO:0000314"/>
    <property type="project" value="MGI"/>
</dbReference>
<dbReference type="GO" id="GO:0005737">
    <property type="term" value="C:cytoplasm"/>
    <property type="evidence" value="ECO:0000314"/>
    <property type="project" value="MGI"/>
</dbReference>
<dbReference type="GO" id="GO:0098978">
    <property type="term" value="C:glutamatergic synapse"/>
    <property type="evidence" value="ECO:0000314"/>
    <property type="project" value="SynGO"/>
</dbReference>
<dbReference type="GO" id="GO:0016328">
    <property type="term" value="C:lateral plasma membrane"/>
    <property type="evidence" value="ECO:0000314"/>
    <property type="project" value="MGI"/>
</dbReference>
<dbReference type="GO" id="GO:0031965">
    <property type="term" value="C:nuclear membrane"/>
    <property type="evidence" value="ECO:0007669"/>
    <property type="project" value="UniProtKB-SubCell"/>
</dbReference>
<dbReference type="GO" id="GO:0005634">
    <property type="term" value="C:nucleus"/>
    <property type="evidence" value="ECO:0000314"/>
    <property type="project" value="MGI"/>
</dbReference>
<dbReference type="GO" id="GO:0014069">
    <property type="term" value="C:postsynaptic density"/>
    <property type="evidence" value="ECO:0000314"/>
    <property type="project" value="SynGO"/>
</dbReference>
<dbReference type="GO" id="GO:0008270">
    <property type="term" value="F:zinc ion binding"/>
    <property type="evidence" value="ECO:0007669"/>
    <property type="project" value="InterPro"/>
</dbReference>
<dbReference type="GO" id="GO:0001825">
    <property type="term" value="P:blastocyst formation"/>
    <property type="evidence" value="ECO:0000315"/>
    <property type="project" value="MGI"/>
</dbReference>
<dbReference type="GO" id="GO:1990403">
    <property type="term" value="P:embryonic brain development"/>
    <property type="evidence" value="ECO:0000315"/>
    <property type="project" value="MGI"/>
</dbReference>
<dbReference type="GO" id="GO:0030010">
    <property type="term" value="P:establishment of cell polarity"/>
    <property type="evidence" value="ECO:0000315"/>
    <property type="project" value="MGI"/>
</dbReference>
<dbReference type="GO" id="GO:0045197">
    <property type="term" value="P:establishment or maintenance of epithelial cell apical/basal polarity"/>
    <property type="evidence" value="ECO:0000314"/>
    <property type="project" value="MGI"/>
</dbReference>
<dbReference type="GO" id="GO:0099562">
    <property type="term" value="P:maintenance of postsynaptic density structure"/>
    <property type="evidence" value="ECO:0000314"/>
    <property type="project" value="SynGO"/>
</dbReference>
<dbReference type="GO" id="GO:0031175">
    <property type="term" value="P:neuron projection development"/>
    <property type="evidence" value="ECO:0000315"/>
    <property type="project" value="MGI"/>
</dbReference>
<dbReference type="GO" id="GO:0099151">
    <property type="term" value="P:regulation of postsynaptic density assembly"/>
    <property type="evidence" value="ECO:0000314"/>
    <property type="project" value="SynGO"/>
</dbReference>
<dbReference type="GO" id="GO:0051602">
    <property type="term" value="P:response to electrical stimulus"/>
    <property type="evidence" value="ECO:0000315"/>
    <property type="project" value="MGI"/>
</dbReference>
<dbReference type="GO" id="GO:0001830">
    <property type="term" value="P:trophectodermal cell fate commitment"/>
    <property type="evidence" value="ECO:0000315"/>
    <property type="project" value="MGI"/>
</dbReference>
<dbReference type="CDD" id="cd09415">
    <property type="entry name" value="LIM1_Prickle"/>
    <property type="match status" value="1"/>
</dbReference>
<dbReference type="CDD" id="cd09418">
    <property type="entry name" value="LIM2_Prickle"/>
    <property type="match status" value="1"/>
</dbReference>
<dbReference type="CDD" id="cd09420">
    <property type="entry name" value="LIM3_Prickle"/>
    <property type="match status" value="1"/>
</dbReference>
<dbReference type="CDD" id="cd09827">
    <property type="entry name" value="PET_Prickle"/>
    <property type="match status" value="1"/>
</dbReference>
<dbReference type="FunFam" id="2.10.110.10:FF:000022">
    <property type="entry name" value="prickle-like protein 2 isoform X1"/>
    <property type="match status" value="1"/>
</dbReference>
<dbReference type="FunFam" id="2.10.110.10:FF:000035">
    <property type="entry name" value="prickle-like protein 2 isoform X1"/>
    <property type="match status" value="1"/>
</dbReference>
<dbReference type="FunFam" id="2.10.110.10:FF:000005">
    <property type="entry name" value="Testin isoform 1"/>
    <property type="match status" value="1"/>
</dbReference>
<dbReference type="Gene3D" id="2.10.110.10">
    <property type="entry name" value="Cysteine Rich Protein"/>
    <property type="match status" value="3"/>
</dbReference>
<dbReference type="InterPro" id="IPR033725">
    <property type="entry name" value="LIM1_prickle"/>
</dbReference>
<dbReference type="InterPro" id="IPR033726">
    <property type="entry name" value="LIM2_prickle"/>
</dbReference>
<dbReference type="InterPro" id="IPR033727">
    <property type="entry name" value="LIM3_prickle"/>
</dbReference>
<dbReference type="InterPro" id="IPR010442">
    <property type="entry name" value="PET_domain"/>
</dbReference>
<dbReference type="InterPro" id="IPR033723">
    <property type="entry name" value="PET_prickle"/>
</dbReference>
<dbReference type="InterPro" id="IPR047120">
    <property type="entry name" value="Pk/Esn/Tes"/>
</dbReference>
<dbReference type="InterPro" id="IPR001781">
    <property type="entry name" value="Znf_LIM"/>
</dbReference>
<dbReference type="PANTHER" id="PTHR24211">
    <property type="entry name" value="LIM DOMAIN-CONTAINING PROTEIN"/>
    <property type="match status" value="1"/>
</dbReference>
<dbReference type="PANTHER" id="PTHR24211:SF18">
    <property type="entry name" value="PRICKLE-LIKE PROTEIN 2"/>
    <property type="match status" value="1"/>
</dbReference>
<dbReference type="Pfam" id="PF00412">
    <property type="entry name" value="LIM"/>
    <property type="match status" value="3"/>
</dbReference>
<dbReference type="Pfam" id="PF06297">
    <property type="entry name" value="PET"/>
    <property type="match status" value="1"/>
</dbReference>
<dbReference type="SMART" id="SM00132">
    <property type="entry name" value="LIM"/>
    <property type="match status" value="3"/>
</dbReference>
<dbReference type="SUPFAM" id="SSF57716">
    <property type="entry name" value="Glucocorticoid receptor-like (DNA-binding domain)"/>
    <property type="match status" value="2"/>
</dbReference>
<dbReference type="PROSITE" id="PS00478">
    <property type="entry name" value="LIM_DOMAIN_1"/>
    <property type="match status" value="2"/>
</dbReference>
<dbReference type="PROSITE" id="PS50023">
    <property type="entry name" value="LIM_DOMAIN_2"/>
    <property type="match status" value="3"/>
</dbReference>
<dbReference type="PROSITE" id="PS51303">
    <property type="entry name" value="PET"/>
    <property type="match status" value="1"/>
</dbReference>
<name>PRIC2_MOUSE</name>
<evidence type="ECO:0000250" key="1"/>
<evidence type="ECO:0000255" key="2">
    <source>
        <dbReference type="PROSITE-ProRule" id="PRU00125"/>
    </source>
</evidence>
<evidence type="ECO:0000255" key="3">
    <source>
        <dbReference type="PROSITE-ProRule" id="PRU00636"/>
    </source>
</evidence>
<evidence type="ECO:0000256" key="4">
    <source>
        <dbReference type="SAM" id="MobiDB-lite"/>
    </source>
</evidence>
<evidence type="ECO:0000269" key="5">
    <source>
    </source>
</evidence>
<evidence type="ECO:0000305" key="6"/>
<evidence type="ECO:0007744" key="7">
    <source>
    </source>
</evidence>
<evidence type="ECO:0007744" key="8">
    <source>
    </source>
</evidence>
<comment type="subcellular location">
    <subcellularLocation>
        <location evidence="6">Nucleus membrane</location>
    </subcellularLocation>
</comment>
<comment type="tissue specificity">
    <text evidence="5">Expressed in the hippocampus and cerebral cortex.</text>
</comment>
<comment type="disruption phenotype">
    <text evidence="5">Null mice are viable, but show an increased seizure rate compared to heterozygous mice, indicating a dosage effect. Heterozygous Prickle2 +/- mice have a decreased seizure threshold compared to wild-type.</text>
</comment>
<comment type="similarity">
    <text evidence="6">Belongs to the prickle / espinas / testin family.</text>
</comment>
<comment type="sequence caution" evidence="6">
    <conflict type="erroneous initiation">
        <sequence resource="EMBL-CDS" id="AAH50793"/>
    </conflict>
    <text>Extended N-terminus.</text>
</comment>
<protein>
    <recommendedName>
        <fullName>Prickle-like protein 2</fullName>
    </recommendedName>
</protein>